<protein>
    <recommendedName>
        <fullName>Dicer-like protein 2-1</fullName>
    </recommendedName>
    <domain>
        <recommendedName>
            <fullName>Endoribonuclease dcl2-1</fullName>
            <ecNumber>3.1.26.-</ecNumber>
        </recommendedName>
    </domain>
    <domain>
        <recommendedName>
            <fullName>ATP-dependent helicase dcl2-1</fullName>
            <ecNumber>3.6.4.-</ecNumber>
        </recommendedName>
    </domain>
</protein>
<feature type="chain" id="PRO_0000306787" description="Dicer-like protein 2-1">
    <location>
        <begin position="1"/>
        <end position="1387"/>
    </location>
</feature>
<feature type="domain" description="Helicase ATP-binding" evidence="3">
    <location>
        <begin position="26"/>
        <end position="205"/>
    </location>
</feature>
<feature type="domain" description="Helicase C-terminal" evidence="4">
    <location>
        <begin position="370"/>
        <end position="535"/>
    </location>
</feature>
<feature type="domain" description="Dicer dsRNA-binding fold" evidence="5">
    <location>
        <begin position="565"/>
        <end position="659"/>
    </location>
</feature>
<feature type="domain" description="RNase III 1" evidence="2">
    <location>
        <begin position="915"/>
        <end position="1055"/>
    </location>
</feature>
<feature type="domain" description="RNase III 2" evidence="2">
    <location>
        <begin position="1094"/>
        <end position="1277"/>
    </location>
</feature>
<feature type="short sequence motif" description="DEAH box">
    <location>
        <begin position="146"/>
        <end position="149"/>
    </location>
</feature>
<feature type="binding site" evidence="3">
    <location>
        <begin position="39"/>
        <end position="46"/>
    </location>
    <ligand>
        <name>ATP</name>
        <dbReference type="ChEBI" id="CHEBI:30616"/>
    </ligand>
</feature>
<feature type="binding site" evidence="1">
    <location>
        <position position="1133"/>
    </location>
    <ligand>
        <name>Mg(2+)</name>
        <dbReference type="ChEBI" id="CHEBI:18420"/>
    </ligand>
</feature>
<feature type="binding site" evidence="1">
    <location>
        <position position="1263"/>
    </location>
    <ligand>
        <name>Mg(2+)</name>
        <dbReference type="ChEBI" id="CHEBI:18420"/>
    </ligand>
</feature>
<feature type="binding site" evidence="1">
    <location>
        <position position="1266"/>
    </location>
    <ligand>
        <name>Mg(2+)</name>
        <dbReference type="ChEBI" id="CHEBI:18420"/>
    </ligand>
</feature>
<feature type="site" description="Important for activity" evidence="1">
    <location>
        <position position="1259"/>
    </location>
</feature>
<evidence type="ECO:0000250" key="1"/>
<evidence type="ECO:0000255" key="2">
    <source>
        <dbReference type="PROSITE-ProRule" id="PRU00177"/>
    </source>
</evidence>
<evidence type="ECO:0000255" key="3">
    <source>
        <dbReference type="PROSITE-ProRule" id="PRU00541"/>
    </source>
</evidence>
<evidence type="ECO:0000255" key="4">
    <source>
        <dbReference type="PROSITE-ProRule" id="PRU00542"/>
    </source>
</evidence>
<evidence type="ECO:0000255" key="5">
    <source>
        <dbReference type="PROSITE-ProRule" id="PRU00657"/>
    </source>
</evidence>
<evidence type="ECO:0000305" key="6"/>
<accession>A2R345</accession>
<dbReference type="EC" id="3.1.26.-"/>
<dbReference type="EC" id="3.6.4.-"/>
<dbReference type="EMBL" id="AM270320">
    <property type="protein sequence ID" value="CAK46537.1"/>
    <property type="status" value="ALT_SEQ"/>
    <property type="molecule type" value="Genomic_DNA"/>
</dbReference>
<dbReference type="SMR" id="A2R345"/>
<dbReference type="EnsemblFungi" id="CAK46537">
    <property type="protein sequence ID" value="CAK46537"/>
    <property type="gene ID" value="An14g03000"/>
</dbReference>
<dbReference type="Proteomes" id="UP000006706">
    <property type="component" value="Chromosome 1R"/>
</dbReference>
<dbReference type="GO" id="GO:0005737">
    <property type="term" value="C:cytoplasm"/>
    <property type="evidence" value="ECO:0007669"/>
    <property type="project" value="TreeGrafter"/>
</dbReference>
<dbReference type="GO" id="GO:0005634">
    <property type="term" value="C:nucleus"/>
    <property type="evidence" value="ECO:0007669"/>
    <property type="project" value="TreeGrafter"/>
</dbReference>
<dbReference type="GO" id="GO:0005524">
    <property type="term" value="F:ATP binding"/>
    <property type="evidence" value="ECO:0007669"/>
    <property type="project" value="UniProtKB-KW"/>
</dbReference>
<dbReference type="GO" id="GO:0004386">
    <property type="term" value="F:helicase activity"/>
    <property type="evidence" value="ECO:0007669"/>
    <property type="project" value="UniProtKB-KW"/>
</dbReference>
<dbReference type="GO" id="GO:0046872">
    <property type="term" value="F:metal ion binding"/>
    <property type="evidence" value="ECO:0007669"/>
    <property type="project" value="UniProtKB-KW"/>
</dbReference>
<dbReference type="GO" id="GO:0004525">
    <property type="term" value="F:ribonuclease III activity"/>
    <property type="evidence" value="ECO:0007669"/>
    <property type="project" value="InterPro"/>
</dbReference>
<dbReference type="GO" id="GO:0003723">
    <property type="term" value="F:RNA binding"/>
    <property type="evidence" value="ECO:0007669"/>
    <property type="project" value="UniProtKB-KW"/>
</dbReference>
<dbReference type="GO" id="GO:0051607">
    <property type="term" value="P:defense response to virus"/>
    <property type="evidence" value="ECO:0007669"/>
    <property type="project" value="UniProtKB-KW"/>
</dbReference>
<dbReference type="GO" id="GO:0050688">
    <property type="term" value="P:regulation of defense response to virus"/>
    <property type="evidence" value="ECO:0007669"/>
    <property type="project" value="UniProtKB-KW"/>
</dbReference>
<dbReference type="GO" id="GO:0030422">
    <property type="term" value="P:siRNA processing"/>
    <property type="evidence" value="ECO:0007669"/>
    <property type="project" value="TreeGrafter"/>
</dbReference>
<dbReference type="CDD" id="cd18034">
    <property type="entry name" value="DEXHc_dicer"/>
    <property type="match status" value="1"/>
</dbReference>
<dbReference type="CDD" id="cd00593">
    <property type="entry name" value="RIBOc"/>
    <property type="match status" value="2"/>
</dbReference>
<dbReference type="CDD" id="cd18802">
    <property type="entry name" value="SF2_C_dicer"/>
    <property type="match status" value="1"/>
</dbReference>
<dbReference type="FunFam" id="1.10.1520.10:FF:000015">
    <property type="entry name" value="Dicer-like protein 1"/>
    <property type="match status" value="1"/>
</dbReference>
<dbReference type="FunFam" id="3.40.50.300:FF:001669">
    <property type="entry name" value="Dicer-like protein 1"/>
    <property type="match status" value="1"/>
</dbReference>
<dbReference type="FunFam" id="1.10.1520.10:FF:000032">
    <property type="entry name" value="Dicer-like protein 2"/>
    <property type="match status" value="1"/>
</dbReference>
<dbReference type="FunFam" id="3.40.50.300:FF:002480">
    <property type="entry name" value="Dicer-like protein 2"/>
    <property type="match status" value="1"/>
</dbReference>
<dbReference type="Gene3D" id="3.30.160.380">
    <property type="entry name" value="Dicer dimerisation domain"/>
    <property type="match status" value="1"/>
</dbReference>
<dbReference type="Gene3D" id="3.40.50.300">
    <property type="entry name" value="P-loop containing nucleotide triphosphate hydrolases"/>
    <property type="match status" value="2"/>
</dbReference>
<dbReference type="Gene3D" id="1.10.1520.10">
    <property type="entry name" value="Ribonuclease III domain"/>
    <property type="match status" value="2"/>
</dbReference>
<dbReference type="InterPro" id="IPR011545">
    <property type="entry name" value="DEAD/DEAH_box_helicase_dom"/>
</dbReference>
<dbReference type="InterPro" id="IPR038248">
    <property type="entry name" value="Dicer_dimer_sf"/>
</dbReference>
<dbReference type="InterPro" id="IPR005034">
    <property type="entry name" value="Dicer_dimerisation_dom"/>
</dbReference>
<dbReference type="InterPro" id="IPR014001">
    <property type="entry name" value="Helicase_ATP-bd"/>
</dbReference>
<dbReference type="InterPro" id="IPR001650">
    <property type="entry name" value="Helicase_C-like"/>
</dbReference>
<dbReference type="InterPro" id="IPR027417">
    <property type="entry name" value="P-loop_NTPase"/>
</dbReference>
<dbReference type="InterPro" id="IPR000999">
    <property type="entry name" value="RNase_III_dom"/>
</dbReference>
<dbReference type="InterPro" id="IPR036389">
    <property type="entry name" value="RNase_III_sf"/>
</dbReference>
<dbReference type="PANTHER" id="PTHR14950">
    <property type="entry name" value="DICER-RELATED"/>
    <property type="match status" value="1"/>
</dbReference>
<dbReference type="PANTHER" id="PTHR14950:SF37">
    <property type="entry name" value="ENDORIBONUCLEASE DICER"/>
    <property type="match status" value="1"/>
</dbReference>
<dbReference type="Pfam" id="PF00270">
    <property type="entry name" value="DEAD"/>
    <property type="match status" value="1"/>
</dbReference>
<dbReference type="Pfam" id="PF03368">
    <property type="entry name" value="Dicer_dimer"/>
    <property type="match status" value="1"/>
</dbReference>
<dbReference type="Pfam" id="PF00271">
    <property type="entry name" value="Helicase_C"/>
    <property type="match status" value="1"/>
</dbReference>
<dbReference type="Pfam" id="PF00636">
    <property type="entry name" value="Ribonuclease_3"/>
    <property type="match status" value="2"/>
</dbReference>
<dbReference type="SMART" id="SM00487">
    <property type="entry name" value="DEXDc"/>
    <property type="match status" value="1"/>
</dbReference>
<dbReference type="SMART" id="SM00490">
    <property type="entry name" value="HELICc"/>
    <property type="match status" value="1"/>
</dbReference>
<dbReference type="SMART" id="SM00535">
    <property type="entry name" value="RIBOc"/>
    <property type="match status" value="2"/>
</dbReference>
<dbReference type="SUPFAM" id="SSF52540">
    <property type="entry name" value="P-loop containing nucleoside triphosphate hydrolases"/>
    <property type="match status" value="1"/>
</dbReference>
<dbReference type="SUPFAM" id="SSF69065">
    <property type="entry name" value="RNase III domain-like"/>
    <property type="match status" value="2"/>
</dbReference>
<dbReference type="PROSITE" id="PS51327">
    <property type="entry name" value="DICER_DSRBF"/>
    <property type="match status" value="1"/>
</dbReference>
<dbReference type="PROSITE" id="PS51192">
    <property type="entry name" value="HELICASE_ATP_BIND_1"/>
    <property type="match status" value="1"/>
</dbReference>
<dbReference type="PROSITE" id="PS51194">
    <property type="entry name" value="HELICASE_CTER"/>
    <property type="match status" value="1"/>
</dbReference>
<dbReference type="PROSITE" id="PS00517">
    <property type="entry name" value="RNASE_3_1"/>
    <property type="match status" value="1"/>
</dbReference>
<dbReference type="PROSITE" id="PS50142">
    <property type="entry name" value="RNASE_3_2"/>
    <property type="match status" value="2"/>
</dbReference>
<gene>
    <name type="primary">dcl2-1</name>
    <name type="ORF">An14g03000</name>
</gene>
<organism>
    <name type="scientific">Aspergillus niger (strain ATCC MYA-4892 / CBS 513.88 / FGSC A1513)</name>
    <dbReference type="NCBI Taxonomy" id="425011"/>
    <lineage>
        <taxon>Eukaryota</taxon>
        <taxon>Fungi</taxon>
        <taxon>Dikarya</taxon>
        <taxon>Ascomycota</taxon>
        <taxon>Pezizomycotina</taxon>
        <taxon>Eurotiomycetes</taxon>
        <taxon>Eurotiomycetidae</taxon>
        <taxon>Eurotiales</taxon>
        <taxon>Aspergillaceae</taxon>
        <taxon>Aspergillus</taxon>
        <taxon>Aspergillus subgen. Circumdati</taxon>
    </lineage>
</organism>
<keyword id="KW-0051">Antiviral defense</keyword>
<keyword id="KW-0930">Antiviral protein</keyword>
<keyword id="KW-0067">ATP-binding</keyword>
<keyword id="KW-0347">Helicase</keyword>
<keyword id="KW-0378">Hydrolase</keyword>
<keyword id="KW-0460">Magnesium</keyword>
<keyword id="KW-0464">Manganese</keyword>
<keyword id="KW-0479">Metal-binding</keyword>
<keyword id="KW-0547">Nucleotide-binding</keyword>
<keyword id="KW-1185">Reference proteome</keyword>
<keyword id="KW-0677">Repeat</keyword>
<keyword id="KW-0694">RNA-binding</keyword>
<sequence>MTVAATVLPAGEDAPAYRPRSYQVEMFEASLKENIIVTMGTGSGKTHIALLRIIKELESNPHKLIWFLTPTVALCLQQFKFLSDNIPAVRARTLTSLDKVELWTEQPVWDAILKEMQVVVSTHAVLADAMSHGFVKITQLGLMIFDEAHHCMRRHPANKIMQDFYHPALERHGAEAVPKILGLTASPVVRSNRQELLKIESNLDAVCKTPRTHRSELMTHTHRPHLQQILFTPVLLDDLQVGSKTLKALVSAWTSLRLEDDPYIKKLRKSPLDGRALQKVLESGKTYCNDQLKRFATRSLHIFEELGEWAADYFIHASIEQLKARAGNSADTMGWTDEEKAYLLDIVSKLPIPNIDLTHSDPDRIPISSKFRSLLEFLDTKGEPNFSGLIFAKQRATVSVMEKLLSIHPVTKHRFRCASFVGWSGGGSKDVLGELLDARMQRDTLSEFRTGQKNLIIATDVLEEGIDISACSVVVCFDKPPNLKSFVQRRGRARHRQSTYAIMFATDDESSALSKWEDLEQAMIEAYEDDERRLREAWALEAINEEVVERLEVQSTGAVLTADTAVAHLNHFCAVLPRQPYASNEPEFSYEKDDADLLRGTVTLPSCVHPGVRRIQGQRWWQTERAARKEAAFQAYKRLYEFGLLSDHLLPFKRNLELKETDLTNLPALVEVSEQYDPWVDWACSWSSPDVHQTRIAIKHNGDSRMCIRLTSPTSLPPVEPMTLFWDSETIYTLDFDKPKRMKEIAAESIENMRLATALYLQAASSRQMRPEQDFVTLFGPDLTDLELAEWLNKHAGDEPALEVYSRKDFPTVMGIVRDRSRYNEPMLFKRWVVSGQDDTPIVELECDAVPKRRNLLHRQTLAAKQPDSETPAISSKIRLILAENCTIDKLPYAETIFGRFISVILDRLEATLVATRLCETILRDLEFSSIRHIITAITAPSAQSLTNYQRYEFFGDSVLKFTVSCQLFFQHPNWHEGYLSEGRDEIVQNSRLARAALDAGLDAFIMNKMFTPRKWSAPLISEKISLTPKQRTMSTKVLADVVEALIGASYIDGGFAAAHACIHRFLPEVNLENIDRTTAPMPKDGVTNHTLNDDHLMAHIGYTFTNKSLLVESLTHPSCQFDTTTQSYQRLEFLGDAVLDMAIMSTLLSHPREIPQGLMTKIKHAVVNANLLAFFCMEFALTEKRTNVQVTPTGTVTLNPSTEHIELWRFMRYQGAHLQTARDLALSRHSSLRGSIIHGLKHSPSYPWKSLSQLNADKFFSDIIESILGAIFIDSHGNLAECEKFLERLGLLRYLRRILKDEVDVMHPRNIAQQMAKGEIRFEVLRVPNEGGGGGEDDGATYRCTVKMAGVDGVAVVVEGCLTSEEAEITAAERAVEILVGRGCSL</sequence>
<reference key="1">
    <citation type="journal article" date="2007" name="Nat. Biotechnol.">
        <title>Genome sequencing and analysis of the versatile cell factory Aspergillus niger CBS 513.88.</title>
        <authorList>
            <person name="Pel H.J."/>
            <person name="de Winde J.H."/>
            <person name="Archer D.B."/>
            <person name="Dyer P.S."/>
            <person name="Hofmann G."/>
            <person name="Schaap P.J."/>
            <person name="Turner G."/>
            <person name="de Vries R.P."/>
            <person name="Albang R."/>
            <person name="Albermann K."/>
            <person name="Andersen M.R."/>
            <person name="Bendtsen J.D."/>
            <person name="Benen J.A.E."/>
            <person name="van den Berg M."/>
            <person name="Breestraat S."/>
            <person name="Caddick M.X."/>
            <person name="Contreras R."/>
            <person name="Cornell M."/>
            <person name="Coutinho P.M."/>
            <person name="Danchin E.G.J."/>
            <person name="Debets A.J.M."/>
            <person name="Dekker P."/>
            <person name="van Dijck P.W.M."/>
            <person name="van Dijk A."/>
            <person name="Dijkhuizen L."/>
            <person name="Driessen A.J.M."/>
            <person name="d'Enfert C."/>
            <person name="Geysens S."/>
            <person name="Goosen C."/>
            <person name="Groot G.S.P."/>
            <person name="de Groot P.W.J."/>
            <person name="Guillemette T."/>
            <person name="Henrissat B."/>
            <person name="Herweijer M."/>
            <person name="van den Hombergh J.P.T.W."/>
            <person name="van den Hondel C.A.M.J.J."/>
            <person name="van der Heijden R.T.J.M."/>
            <person name="van der Kaaij R.M."/>
            <person name="Klis F.M."/>
            <person name="Kools H.J."/>
            <person name="Kubicek C.P."/>
            <person name="van Kuyk P.A."/>
            <person name="Lauber J."/>
            <person name="Lu X."/>
            <person name="van der Maarel M.J.E.C."/>
            <person name="Meulenberg R."/>
            <person name="Menke H."/>
            <person name="Mortimer M.A."/>
            <person name="Nielsen J."/>
            <person name="Oliver S.G."/>
            <person name="Olsthoorn M."/>
            <person name="Pal K."/>
            <person name="van Peij N.N.M.E."/>
            <person name="Ram A.F.J."/>
            <person name="Rinas U."/>
            <person name="Roubos J.A."/>
            <person name="Sagt C.M.J."/>
            <person name="Schmoll M."/>
            <person name="Sun J."/>
            <person name="Ussery D."/>
            <person name="Varga J."/>
            <person name="Vervecken W."/>
            <person name="van de Vondervoort P.J.J."/>
            <person name="Wedler H."/>
            <person name="Woesten H.A.B."/>
            <person name="Zeng A.-P."/>
            <person name="van Ooyen A.J.J."/>
            <person name="Visser J."/>
            <person name="Stam H."/>
        </authorList>
    </citation>
    <scope>NUCLEOTIDE SEQUENCE [LARGE SCALE GENOMIC DNA]</scope>
    <source>
        <strain>ATCC MYA-4892 / CBS 513.88 / FGSC A1513</strain>
    </source>
</reference>
<name>DCL21_ASPNC</name>
<comment type="function">
    <text evidence="1">Dicer-like endonuclease involved in cleaving double-stranded RNA in the RNA interference (RNAi) pathway. Produces 21 to 25 bp dsRNAs (siRNAs) which target the selective destruction of homologous RNAs leading to sequence-specific suppression of gene expression, called post-transcriptional gene silencing (PTGS). Part of a broad host defense response against viral infection and transposons (By similarity).</text>
</comment>
<comment type="cofactor">
    <cofactor evidence="1">
        <name>Mg(2+)</name>
        <dbReference type="ChEBI" id="CHEBI:18420"/>
    </cofactor>
    <cofactor evidence="1">
        <name>Mn(2+)</name>
        <dbReference type="ChEBI" id="CHEBI:29035"/>
    </cofactor>
</comment>
<comment type="similarity">
    <text evidence="5">Belongs to the helicase family. Dicer subfamily.</text>
</comment>
<comment type="sequence caution" evidence="6">
    <conflict type="erroneous gene model prediction">
        <sequence resource="EMBL-CDS" id="CAK46537"/>
    </conflict>
</comment>
<proteinExistence type="inferred from homology"/>